<comment type="function">
    <text evidence="1">Endonuclease that specifically degrades the RNA of RNA-DNA hybrids.</text>
</comment>
<comment type="catalytic activity">
    <reaction evidence="1">
        <text>Endonucleolytic cleavage to 5'-phosphomonoester.</text>
        <dbReference type="EC" id="3.1.26.4"/>
    </reaction>
</comment>
<comment type="cofactor">
    <cofactor evidence="1">
        <name>Mg(2+)</name>
        <dbReference type="ChEBI" id="CHEBI:18420"/>
    </cofactor>
    <text evidence="1">Binds 1 Mg(2+) ion per subunit. May bind a second metal ion at a regulatory site, or after substrate binding.</text>
</comment>
<comment type="subunit">
    <text evidence="1">Monomer.</text>
</comment>
<comment type="subcellular location">
    <subcellularLocation>
        <location evidence="1">Cytoplasm</location>
    </subcellularLocation>
</comment>
<comment type="similarity">
    <text evidence="1">Belongs to the RNase H family.</text>
</comment>
<protein>
    <recommendedName>
        <fullName evidence="1">Ribonuclease H</fullName>
        <shortName evidence="1">RNase H</shortName>
        <ecNumber evidence="1">3.1.26.4</ecNumber>
    </recommendedName>
</protein>
<sequence length="154" mass="17464">MTKQVEIFTDGSCLGNPGPGGYGAILRYKQHEKTFSAGYYLTTNNRMELMAAIVALEALTSPCEVTLSTDSQYVRQGITQWIHNWKKRGWKTADRKPVRNVDLWQRLDLAIQSHTIQWEWVKGHAGHPENERCDELARQGANSPTLDDTGYNPD</sequence>
<organism>
    <name type="scientific">Yersinia pseudotuberculosis serotype I (strain IP32953)</name>
    <dbReference type="NCBI Taxonomy" id="273123"/>
    <lineage>
        <taxon>Bacteria</taxon>
        <taxon>Pseudomonadati</taxon>
        <taxon>Pseudomonadota</taxon>
        <taxon>Gammaproteobacteria</taxon>
        <taxon>Enterobacterales</taxon>
        <taxon>Yersiniaceae</taxon>
        <taxon>Yersinia</taxon>
    </lineage>
</organism>
<keyword id="KW-0963">Cytoplasm</keyword>
<keyword id="KW-0255">Endonuclease</keyword>
<keyword id="KW-0378">Hydrolase</keyword>
<keyword id="KW-0460">Magnesium</keyword>
<keyword id="KW-0479">Metal-binding</keyword>
<keyword id="KW-0540">Nuclease</keyword>
<reference key="1">
    <citation type="journal article" date="2004" name="Proc. Natl. Acad. Sci. U.S.A.">
        <title>Insights into the evolution of Yersinia pestis through whole-genome comparison with Yersinia pseudotuberculosis.</title>
        <authorList>
            <person name="Chain P.S.G."/>
            <person name="Carniel E."/>
            <person name="Larimer F.W."/>
            <person name="Lamerdin J."/>
            <person name="Stoutland P.O."/>
            <person name="Regala W.M."/>
            <person name="Georgescu A.M."/>
            <person name="Vergez L.M."/>
            <person name="Land M.L."/>
            <person name="Motin V.L."/>
            <person name="Brubaker R.R."/>
            <person name="Fowler J."/>
            <person name="Hinnebusch J."/>
            <person name="Marceau M."/>
            <person name="Medigue C."/>
            <person name="Simonet M."/>
            <person name="Chenal-Francisque V."/>
            <person name="Souza B."/>
            <person name="Dacheux D."/>
            <person name="Elliott J.M."/>
            <person name="Derbise A."/>
            <person name="Hauser L.J."/>
            <person name="Garcia E."/>
        </authorList>
    </citation>
    <scope>NUCLEOTIDE SEQUENCE [LARGE SCALE GENOMIC DNA]</scope>
    <source>
        <strain>IP32953</strain>
    </source>
</reference>
<gene>
    <name evidence="1" type="primary">rnhA</name>
    <name type="ordered locus">YPTB2965</name>
</gene>
<evidence type="ECO:0000255" key="1">
    <source>
        <dbReference type="HAMAP-Rule" id="MF_00042"/>
    </source>
</evidence>
<evidence type="ECO:0000255" key="2">
    <source>
        <dbReference type="PROSITE-ProRule" id="PRU00408"/>
    </source>
</evidence>
<feature type="chain" id="PRO_0000195428" description="Ribonuclease H">
    <location>
        <begin position="1"/>
        <end position="154"/>
    </location>
</feature>
<feature type="domain" description="RNase H type-1" evidence="2">
    <location>
        <begin position="1"/>
        <end position="142"/>
    </location>
</feature>
<feature type="binding site" evidence="1">
    <location>
        <position position="10"/>
    </location>
    <ligand>
        <name>Mg(2+)</name>
        <dbReference type="ChEBI" id="CHEBI:18420"/>
        <label>1</label>
    </ligand>
</feature>
<feature type="binding site" evidence="1">
    <location>
        <position position="10"/>
    </location>
    <ligand>
        <name>Mg(2+)</name>
        <dbReference type="ChEBI" id="CHEBI:18420"/>
        <label>2</label>
    </ligand>
</feature>
<feature type="binding site" evidence="1">
    <location>
        <position position="48"/>
    </location>
    <ligand>
        <name>Mg(2+)</name>
        <dbReference type="ChEBI" id="CHEBI:18420"/>
        <label>1</label>
    </ligand>
</feature>
<feature type="binding site" evidence="1">
    <location>
        <position position="70"/>
    </location>
    <ligand>
        <name>Mg(2+)</name>
        <dbReference type="ChEBI" id="CHEBI:18420"/>
        <label>1</label>
    </ligand>
</feature>
<feature type="binding site" evidence="1">
    <location>
        <position position="134"/>
    </location>
    <ligand>
        <name>Mg(2+)</name>
        <dbReference type="ChEBI" id="CHEBI:18420"/>
        <label>2</label>
    </ligand>
</feature>
<accession>Q667M7</accession>
<name>RNH_YERPS</name>
<dbReference type="EC" id="3.1.26.4" evidence="1"/>
<dbReference type="EMBL" id="BX936398">
    <property type="protein sequence ID" value="CAH22203.1"/>
    <property type="molecule type" value="Genomic_DNA"/>
</dbReference>
<dbReference type="RefSeq" id="WP_002210699.1">
    <property type="nucleotide sequence ID" value="NZ_CP009712.1"/>
</dbReference>
<dbReference type="SMR" id="Q667M7"/>
<dbReference type="GeneID" id="57977475"/>
<dbReference type="KEGG" id="ypo:BZ17_3661"/>
<dbReference type="KEGG" id="yps:YPTB2965"/>
<dbReference type="PATRIC" id="fig|273123.14.peg.3837"/>
<dbReference type="Proteomes" id="UP000001011">
    <property type="component" value="Chromosome"/>
</dbReference>
<dbReference type="GO" id="GO:0005737">
    <property type="term" value="C:cytoplasm"/>
    <property type="evidence" value="ECO:0007669"/>
    <property type="project" value="UniProtKB-SubCell"/>
</dbReference>
<dbReference type="GO" id="GO:0000287">
    <property type="term" value="F:magnesium ion binding"/>
    <property type="evidence" value="ECO:0007669"/>
    <property type="project" value="UniProtKB-UniRule"/>
</dbReference>
<dbReference type="GO" id="GO:0003676">
    <property type="term" value="F:nucleic acid binding"/>
    <property type="evidence" value="ECO:0007669"/>
    <property type="project" value="InterPro"/>
</dbReference>
<dbReference type="GO" id="GO:0004523">
    <property type="term" value="F:RNA-DNA hybrid ribonuclease activity"/>
    <property type="evidence" value="ECO:0007669"/>
    <property type="project" value="UniProtKB-UniRule"/>
</dbReference>
<dbReference type="GO" id="GO:0043137">
    <property type="term" value="P:DNA replication, removal of RNA primer"/>
    <property type="evidence" value="ECO:0007669"/>
    <property type="project" value="TreeGrafter"/>
</dbReference>
<dbReference type="CDD" id="cd09278">
    <property type="entry name" value="RNase_HI_prokaryote_like"/>
    <property type="match status" value="1"/>
</dbReference>
<dbReference type="FunFam" id="3.30.420.10:FF:000008">
    <property type="entry name" value="Ribonuclease H"/>
    <property type="match status" value="1"/>
</dbReference>
<dbReference type="Gene3D" id="3.30.420.10">
    <property type="entry name" value="Ribonuclease H-like superfamily/Ribonuclease H"/>
    <property type="match status" value="1"/>
</dbReference>
<dbReference type="HAMAP" id="MF_00042">
    <property type="entry name" value="RNase_H"/>
    <property type="match status" value="1"/>
</dbReference>
<dbReference type="InterPro" id="IPR050092">
    <property type="entry name" value="RNase_H"/>
</dbReference>
<dbReference type="InterPro" id="IPR012337">
    <property type="entry name" value="RNaseH-like_sf"/>
</dbReference>
<dbReference type="InterPro" id="IPR002156">
    <property type="entry name" value="RNaseH_domain"/>
</dbReference>
<dbReference type="InterPro" id="IPR036397">
    <property type="entry name" value="RNaseH_sf"/>
</dbReference>
<dbReference type="InterPro" id="IPR022892">
    <property type="entry name" value="RNaseHI"/>
</dbReference>
<dbReference type="NCBIfam" id="NF001236">
    <property type="entry name" value="PRK00203.1"/>
    <property type="match status" value="1"/>
</dbReference>
<dbReference type="PANTHER" id="PTHR10642">
    <property type="entry name" value="RIBONUCLEASE H1"/>
    <property type="match status" value="1"/>
</dbReference>
<dbReference type="PANTHER" id="PTHR10642:SF26">
    <property type="entry name" value="RIBONUCLEASE H1"/>
    <property type="match status" value="1"/>
</dbReference>
<dbReference type="Pfam" id="PF00075">
    <property type="entry name" value="RNase_H"/>
    <property type="match status" value="1"/>
</dbReference>
<dbReference type="SUPFAM" id="SSF53098">
    <property type="entry name" value="Ribonuclease H-like"/>
    <property type="match status" value="1"/>
</dbReference>
<dbReference type="PROSITE" id="PS50879">
    <property type="entry name" value="RNASE_H_1"/>
    <property type="match status" value="1"/>
</dbReference>
<proteinExistence type="inferred from homology"/>